<accession>Q98DV6</accession>
<dbReference type="EC" id="1.8.4.11"/>
<dbReference type="EMBL" id="BA000012">
    <property type="protein sequence ID" value="BAB51164.1"/>
    <property type="molecule type" value="Genomic_DNA"/>
</dbReference>
<dbReference type="SMR" id="Q98DV6"/>
<dbReference type="KEGG" id="mlo:mll4530"/>
<dbReference type="eggNOG" id="COG0225">
    <property type="taxonomic scope" value="Bacteria"/>
</dbReference>
<dbReference type="HOGENOM" id="CLU_031040_10_0_5"/>
<dbReference type="Proteomes" id="UP000000552">
    <property type="component" value="Chromosome"/>
</dbReference>
<dbReference type="GO" id="GO:0033744">
    <property type="term" value="F:L-methionine:thioredoxin-disulfide S-oxidoreductase activity"/>
    <property type="evidence" value="ECO:0007669"/>
    <property type="project" value="RHEA"/>
</dbReference>
<dbReference type="GO" id="GO:0008113">
    <property type="term" value="F:peptide-methionine (S)-S-oxide reductase activity"/>
    <property type="evidence" value="ECO:0007669"/>
    <property type="project" value="UniProtKB-UniRule"/>
</dbReference>
<dbReference type="GO" id="GO:0036211">
    <property type="term" value="P:protein modification process"/>
    <property type="evidence" value="ECO:0007669"/>
    <property type="project" value="UniProtKB-UniRule"/>
</dbReference>
<dbReference type="Gene3D" id="3.30.1060.10">
    <property type="entry name" value="Peptide methionine sulphoxide reductase MsrA"/>
    <property type="match status" value="1"/>
</dbReference>
<dbReference type="HAMAP" id="MF_01401">
    <property type="entry name" value="MsrA"/>
    <property type="match status" value="1"/>
</dbReference>
<dbReference type="InterPro" id="IPR002569">
    <property type="entry name" value="Met_Sox_Rdtase_MsrA_dom"/>
</dbReference>
<dbReference type="InterPro" id="IPR036509">
    <property type="entry name" value="Met_Sox_Rdtase_MsrA_sf"/>
</dbReference>
<dbReference type="NCBIfam" id="TIGR00401">
    <property type="entry name" value="msrA"/>
    <property type="match status" value="1"/>
</dbReference>
<dbReference type="PANTHER" id="PTHR43774">
    <property type="entry name" value="PEPTIDE METHIONINE SULFOXIDE REDUCTASE"/>
    <property type="match status" value="1"/>
</dbReference>
<dbReference type="PANTHER" id="PTHR43774:SF1">
    <property type="entry name" value="PEPTIDE METHIONINE SULFOXIDE REDUCTASE MSRA 2"/>
    <property type="match status" value="1"/>
</dbReference>
<dbReference type="Pfam" id="PF01625">
    <property type="entry name" value="PMSR"/>
    <property type="match status" value="1"/>
</dbReference>
<dbReference type="SUPFAM" id="SSF55068">
    <property type="entry name" value="Peptide methionine sulfoxide reductase"/>
    <property type="match status" value="1"/>
</dbReference>
<reference key="1">
    <citation type="journal article" date="2000" name="DNA Res.">
        <title>Complete genome structure of the nitrogen-fixing symbiotic bacterium Mesorhizobium loti.</title>
        <authorList>
            <person name="Kaneko T."/>
            <person name="Nakamura Y."/>
            <person name="Sato S."/>
            <person name="Asamizu E."/>
            <person name="Kato T."/>
            <person name="Sasamoto S."/>
            <person name="Watanabe A."/>
            <person name="Idesawa K."/>
            <person name="Ishikawa A."/>
            <person name="Kawashima K."/>
            <person name="Kimura T."/>
            <person name="Kishida Y."/>
            <person name="Kiyokawa C."/>
            <person name="Kohara M."/>
            <person name="Matsumoto M."/>
            <person name="Matsuno A."/>
            <person name="Mochizuki Y."/>
            <person name="Nakayama S."/>
            <person name="Nakazaki N."/>
            <person name="Shimpo S."/>
            <person name="Sugimoto M."/>
            <person name="Takeuchi C."/>
            <person name="Yamada M."/>
            <person name="Tabata S."/>
        </authorList>
    </citation>
    <scope>NUCLEOTIDE SEQUENCE [LARGE SCALE GENOMIC DNA]</scope>
    <source>
        <strain>LMG 29417 / CECT 9101 / MAFF 303099</strain>
    </source>
</reference>
<feature type="chain" id="PRO_0000138572" description="Peptide methionine sulfoxide reductase MsrA 2">
    <location>
        <begin position="1"/>
        <end position="195"/>
    </location>
</feature>
<feature type="active site" evidence="1">
    <location>
        <position position="18"/>
    </location>
</feature>
<comment type="function">
    <text evidence="1">Has an important function as a repair enzyme for proteins that have been inactivated by oxidation. Catalyzes the reversible oxidation-reduction of methionine sulfoxide in proteins to methionine (By similarity).</text>
</comment>
<comment type="catalytic activity">
    <reaction>
        <text>L-methionyl-[protein] + [thioredoxin]-disulfide + H2O = L-methionyl-(S)-S-oxide-[protein] + [thioredoxin]-dithiol</text>
        <dbReference type="Rhea" id="RHEA:14217"/>
        <dbReference type="Rhea" id="RHEA-COMP:10698"/>
        <dbReference type="Rhea" id="RHEA-COMP:10700"/>
        <dbReference type="Rhea" id="RHEA-COMP:12313"/>
        <dbReference type="Rhea" id="RHEA-COMP:12315"/>
        <dbReference type="ChEBI" id="CHEBI:15377"/>
        <dbReference type="ChEBI" id="CHEBI:16044"/>
        <dbReference type="ChEBI" id="CHEBI:29950"/>
        <dbReference type="ChEBI" id="CHEBI:44120"/>
        <dbReference type="ChEBI" id="CHEBI:50058"/>
        <dbReference type="EC" id="1.8.4.11"/>
    </reaction>
</comment>
<comment type="catalytic activity">
    <reaction>
        <text>[thioredoxin]-disulfide + L-methionine + H2O = L-methionine (S)-S-oxide + [thioredoxin]-dithiol</text>
        <dbReference type="Rhea" id="RHEA:19993"/>
        <dbReference type="Rhea" id="RHEA-COMP:10698"/>
        <dbReference type="Rhea" id="RHEA-COMP:10700"/>
        <dbReference type="ChEBI" id="CHEBI:15377"/>
        <dbReference type="ChEBI" id="CHEBI:29950"/>
        <dbReference type="ChEBI" id="CHEBI:50058"/>
        <dbReference type="ChEBI" id="CHEBI:57844"/>
        <dbReference type="ChEBI" id="CHEBI:58772"/>
        <dbReference type="EC" id="1.8.4.11"/>
    </reaction>
</comment>
<comment type="similarity">
    <text evidence="2">Belongs to the MsrA Met sulfoxide reductase family.</text>
</comment>
<gene>
    <name type="primary">msrA2</name>
    <name type="ordered locus">mll4530</name>
</gene>
<sequence length="195" mass="21351">MDEKAAPGSETAIFAGGCFWGVQGVFQHVKGVSKAVSGYTGGAKDDAVYETVGTGRTGHAESVEITYDPSKVTYGQLLQVYFSVAHNPTQLNFQGPDSGTQYRSTIFAENDTQKQIAQSYIDQLDKAKLYPAPIVTTIETGKTFYPAENYHQDFLTLNPTYPYIVYNDLPKVANLKQLFPALYSEKPVLVLSASN</sequence>
<organism>
    <name type="scientific">Mesorhizobium japonicum (strain LMG 29417 / CECT 9101 / MAFF 303099)</name>
    <name type="common">Mesorhizobium loti (strain MAFF 303099)</name>
    <dbReference type="NCBI Taxonomy" id="266835"/>
    <lineage>
        <taxon>Bacteria</taxon>
        <taxon>Pseudomonadati</taxon>
        <taxon>Pseudomonadota</taxon>
        <taxon>Alphaproteobacteria</taxon>
        <taxon>Hyphomicrobiales</taxon>
        <taxon>Phyllobacteriaceae</taxon>
        <taxon>Mesorhizobium</taxon>
    </lineage>
</organism>
<protein>
    <recommendedName>
        <fullName>Peptide methionine sulfoxide reductase MsrA 2</fullName>
        <shortName>Protein-methionine-S-oxide reductase 2</shortName>
        <ecNumber>1.8.4.11</ecNumber>
    </recommendedName>
    <alternativeName>
        <fullName>Peptide-methionine (S)-S-oxide reductase 2</fullName>
        <shortName>Peptide Met(O) reductase 2</shortName>
    </alternativeName>
</protein>
<keyword id="KW-0560">Oxidoreductase</keyword>
<proteinExistence type="inferred from homology"/>
<name>MSRA2_RHILO</name>
<evidence type="ECO:0000250" key="1"/>
<evidence type="ECO:0000305" key="2"/>